<reference key="1">
    <citation type="journal article" date="2006" name="DNA Seq.">
        <title>Molecular cloning of nuclear receptor coactivator-1 gene in pig.</title>
        <authorList>
            <person name="Yu D."/>
            <person name="Mneg H."/>
            <person name="Bai C."/>
            <person name="Zhao W."/>
            <person name="Wang Q.S."/>
            <person name="Pan Y."/>
        </authorList>
    </citation>
    <scope>NUCLEOTIDE SEQUENCE [MRNA]</scope>
</reference>
<accession>Q4PJW2</accession>
<organism>
    <name type="scientific">Sus scrofa</name>
    <name type="common">Pig</name>
    <dbReference type="NCBI Taxonomy" id="9823"/>
    <lineage>
        <taxon>Eukaryota</taxon>
        <taxon>Metazoa</taxon>
        <taxon>Chordata</taxon>
        <taxon>Craniata</taxon>
        <taxon>Vertebrata</taxon>
        <taxon>Euteleostomi</taxon>
        <taxon>Mammalia</taxon>
        <taxon>Eutheria</taxon>
        <taxon>Laurasiatheria</taxon>
        <taxon>Artiodactyla</taxon>
        <taxon>Suina</taxon>
        <taxon>Suidae</taxon>
        <taxon>Sus</taxon>
    </lineage>
</organism>
<sequence>MSGLGDSSSDPANPDSHKRKGSPCDTLASSTEKRRREQENKYLEELAELLSANISDIDSLSVKPDKCKILKKTVDQIQLMKRMEQEKSTTDDEVQKSDISSSSQGVIEKESLGPLLLEALDGFFFVVNCEGRIVFVSENVTSYLGYNQEELMNTSVYSILHVGDHAEFVKNLLPKSLVNGVPWPQEATRRNSHTFNCRMLIHPPDEPGTENQEACQRYEVMQCFTVSQPKSIQEDGEDFQSCLICIARRLPRPPAIMGVESFMTKQDTTGKIISIDTSSLRAAGRTGWEEFMRKCIYAFFQPQGREPSYARQLFQEVMTRGTASSPSYRFILNDGTMLSAHTKCKLCYPQSPDMQPFIMGIHIIDREHSGLSPQDDTNSGMSIPRVNPPVNPSISPAHGVARSSSLPPSNSNMVSTRVNRQQSSDLHSSSHSNSSNSQGSFGCSPGNQIVAGVALNQGQASSQSTNPPLNLNNSPMEGTGISLAQFMSPRRQVSSGLATRPRMPNNSFPPNIPTLNSPVSMTSTACNNSNRSYSNIPVTSLQSMNEGPNNSVGFSAGSPVLRQMSSQNSPSRLNIQPAKAESKDNKETASILNEMIQSDNSSNDGKPLDSGLLHNNDRLSDGDNKYSQTSHKLVQLLTTTAEQQLRHADIDTSCKEVLSCTGTSSSASANSSSGSCPSSHSSLTERHKILHRLLQEGSPSDITTLSVEPDKKDSASTSVSVTGQVPGNSGIKLELDASKKKESKDHQLLRYLLDKDEKDLRSTPNLSLDDVKVKVEKKEQMDPCNTNPTPMTKPPPEEIKLESQSQFTADLDQFDQLLPTLEKAAQLPGLCETERMDGAVTSVTIKSEILPATLQSTTARPTSRLNRLPELELEAIDNQFGQPGTGDQIPWANNTVTAVNQNKPEDQCISSQLDELLCPPTTVEGRNDEKALLEQLVSFLSGKDETELAELDRALGIDKLVQGGGLDVLSERFPPQQATPPLMMEERPNLYSQPYSSPSPTANLSGPFQGMVRQKPSLGTMPVQVTPPRGAFSPGMGMQPRQTLNRPPAAPNQLRLQLQQRLQGQQQLIHQNRQAILNQFAANAPVGINMRSGMQQQITPQPPLNAQMLAQRQRELYSQQHRRRQLIQQQRAMLMRQQSFGNNLPPSSGLPVPMGNPRLPQGAPQQFPYPPNYGTNPGTPPASTSPFSQLAENPEATLGNRNSMVNRGMTGNMGGQFGTGINPQMQQNVFQYPGSGMVPQGEANFAPSLSPGSSMVPMPIPPPQSSLLQQTPPASGYQSPDMKAWQQGAMGNNNVFSQAVQNQPTPAQPGVYNNMSITVSMAGGNTNVQNMNPMMGQMQMSSLQMPGMNTVCPEQINDPALRHTGLYCNQLSSTDLLKTEADGTQVQQVQVFADVQCTVNLVGGDPYLNQPGPLGTQKPTAGPQTPQAQQKSLLQQLLTE</sequence>
<name>NCOA1_PIG</name>
<protein>
    <recommendedName>
        <fullName>Nuclear receptor coactivator 1</fullName>
        <shortName>NCoA-1</shortName>
        <ecNumber>2.3.1.48</ecNumber>
    </recommendedName>
    <alternativeName>
        <fullName>Steroid receptor coactivator 1</fullName>
        <shortName>SRC-1</shortName>
    </alternativeName>
</protein>
<dbReference type="EC" id="2.3.1.48"/>
<dbReference type="EMBL" id="DQ078269">
    <property type="protein sequence ID" value="AAY82453.1"/>
    <property type="molecule type" value="mRNA"/>
</dbReference>
<dbReference type="RefSeq" id="NP_001020399.1">
    <property type="nucleotide sequence ID" value="NM_001025228.1"/>
</dbReference>
<dbReference type="SMR" id="Q4PJW2"/>
<dbReference type="FunCoup" id="Q4PJW2">
    <property type="interactions" value="1402"/>
</dbReference>
<dbReference type="STRING" id="9823.ENSSSCP00000048096"/>
<dbReference type="GlyGen" id="Q4PJW2">
    <property type="glycosylation" value="2 sites"/>
</dbReference>
<dbReference type="PaxDb" id="9823-ENSSSCP00000009151"/>
<dbReference type="GeneID" id="574068"/>
<dbReference type="KEGG" id="ssc:574068"/>
<dbReference type="CTD" id="8648"/>
<dbReference type="eggNOG" id="KOG3561">
    <property type="taxonomic scope" value="Eukaryota"/>
</dbReference>
<dbReference type="InParanoid" id="Q4PJW2"/>
<dbReference type="OrthoDB" id="10035882at2759"/>
<dbReference type="Proteomes" id="UP000008227">
    <property type="component" value="Unplaced"/>
</dbReference>
<dbReference type="Proteomes" id="UP000314985">
    <property type="component" value="Unplaced"/>
</dbReference>
<dbReference type="Proteomes" id="UP000694570">
    <property type="component" value="Unplaced"/>
</dbReference>
<dbReference type="Proteomes" id="UP000694571">
    <property type="component" value="Unplaced"/>
</dbReference>
<dbReference type="Proteomes" id="UP000694720">
    <property type="component" value="Unplaced"/>
</dbReference>
<dbReference type="Proteomes" id="UP000694722">
    <property type="component" value="Unplaced"/>
</dbReference>
<dbReference type="Proteomes" id="UP000694723">
    <property type="component" value="Unplaced"/>
</dbReference>
<dbReference type="Proteomes" id="UP000694724">
    <property type="component" value="Unplaced"/>
</dbReference>
<dbReference type="Proteomes" id="UP000694725">
    <property type="component" value="Unplaced"/>
</dbReference>
<dbReference type="Proteomes" id="UP000694726">
    <property type="component" value="Unplaced"/>
</dbReference>
<dbReference type="Proteomes" id="UP000694727">
    <property type="component" value="Unplaced"/>
</dbReference>
<dbReference type="Proteomes" id="UP000694728">
    <property type="component" value="Unplaced"/>
</dbReference>
<dbReference type="GO" id="GO:0005634">
    <property type="term" value="C:nucleus"/>
    <property type="evidence" value="ECO:0000318"/>
    <property type="project" value="GO_Central"/>
</dbReference>
<dbReference type="GO" id="GO:0004402">
    <property type="term" value="F:histone acetyltransferase activity"/>
    <property type="evidence" value="ECO:0007669"/>
    <property type="project" value="UniProtKB-EC"/>
</dbReference>
<dbReference type="GO" id="GO:0016922">
    <property type="term" value="F:nuclear receptor binding"/>
    <property type="evidence" value="ECO:0000318"/>
    <property type="project" value="GO_Central"/>
</dbReference>
<dbReference type="GO" id="GO:0046983">
    <property type="term" value="F:protein dimerization activity"/>
    <property type="evidence" value="ECO:0007669"/>
    <property type="project" value="InterPro"/>
</dbReference>
<dbReference type="GO" id="GO:0003713">
    <property type="term" value="F:transcription coactivator activity"/>
    <property type="evidence" value="ECO:0000250"/>
    <property type="project" value="UniProtKB"/>
</dbReference>
<dbReference type="GO" id="GO:0032870">
    <property type="term" value="P:cellular response to hormone stimulus"/>
    <property type="evidence" value="ECO:0000318"/>
    <property type="project" value="GO_Central"/>
</dbReference>
<dbReference type="GO" id="GO:0045893">
    <property type="term" value="P:positive regulation of DNA-templated transcription"/>
    <property type="evidence" value="ECO:0000250"/>
    <property type="project" value="UniProtKB"/>
</dbReference>
<dbReference type="GO" id="GO:0045944">
    <property type="term" value="P:positive regulation of transcription by RNA polymerase II"/>
    <property type="evidence" value="ECO:0000318"/>
    <property type="project" value="GO_Central"/>
</dbReference>
<dbReference type="CDD" id="cd18948">
    <property type="entry name" value="bHLH-PAS_NCoA1_SRC1"/>
    <property type="match status" value="1"/>
</dbReference>
<dbReference type="CDD" id="cd00130">
    <property type="entry name" value="PAS"/>
    <property type="match status" value="1"/>
</dbReference>
<dbReference type="FunFam" id="3.30.450.20:FF:000007">
    <property type="entry name" value="Nuclear receptor coactivator"/>
    <property type="match status" value="1"/>
</dbReference>
<dbReference type="FunFam" id="3.30.450.20:FF:000031">
    <property type="entry name" value="Nuclear receptor coactivator"/>
    <property type="match status" value="1"/>
</dbReference>
<dbReference type="FunFam" id="4.10.280.10:FF:000008">
    <property type="entry name" value="Nuclear receptor coactivator"/>
    <property type="match status" value="1"/>
</dbReference>
<dbReference type="Gene3D" id="6.10.140.410">
    <property type="match status" value="1"/>
</dbReference>
<dbReference type="Gene3D" id="4.10.280.10">
    <property type="entry name" value="Helix-loop-helix DNA-binding domain"/>
    <property type="match status" value="1"/>
</dbReference>
<dbReference type="Gene3D" id="3.30.450.20">
    <property type="entry name" value="PAS domain"/>
    <property type="match status" value="2"/>
</dbReference>
<dbReference type="InterPro" id="IPR011598">
    <property type="entry name" value="bHLH_dom"/>
</dbReference>
<dbReference type="InterPro" id="IPR056193">
    <property type="entry name" value="bHLH_NCOA1-3"/>
</dbReference>
<dbReference type="InterPro" id="IPR036638">
    <property type="entry name" value="HLH_DNA-bd_sf"/>
</dbReference>
<dbReference type="InterPro" id="IPR010011">
    <property type="entry name" value="NCO_DUF1518"/>
</dbReference>
<dbReference type="InterPro" id="IPR028819">
    <property type="entry name" value="NCOA1_bHLH"/>
</dbReference>
<dbReference type="InterPro" id="IPR009110">
    <property type="entry name" value="Nuc_rcpt_coact"/>
</dbReference>
<dbReference type="InterPro" id="IPR014920">
    <property type="entry name" value="Nuc_rcpt_coact_Ncoa-typ"/>
</dbReference>
<dbReference type="InterPro" id="IPR037077">
    <property type="entry name" value="Nuc_rcpt_coact_Ncoa_int_sf"/>
</dbReference>
<dbReference type="InterPro" id="IPR017426">
    <property type="entry name" value="Nuclear_rcpt_coactivator"/>
</dbReference>
<dbReference type="InterPro" id="IPR000014">
    <property type="entry name" value="PAS"/>
</dbReference>
<dbReference type="InterPro" id="IPR035965">
    <property type="entry name" value="PAS-like_dom_sf"/>
</dbReference>
<dbReference type="InterPro" id="IPR013767">
    <property type="entry name" value="PAS_fold"/>
</dbReference>
<dbReference type="InterPro" id="IPR014935">
    <property type="entry name" value="SRC/p160_LXXLL"/>
</dbReference>
<dbReference type="PANTHER" id="PTHR10684">
    <property type="entry name" value="NUCLEAR RECEPTOR COACTIVATOR"/>
    <property type="match status" value="1"/>
</dbReference>
<dbReference type="PANTHER" id="PTHR10684:SF1">
    <property type="entry name" value="NUCLEAR RECEPTOR COACTIVATOR 1"/>
    <property type="match status" value="1"/>
</dbReference>
<dbReference type="Pfam" id="PF23172">
    <property type="entry name" value="bHLH_NCOA"/>
    <property type="match status" value="1"/>
</dbReference>
<dbReference type="Pfam" id="PF07469">
    <property type="entry name" value="DUF1518"/>
    <property type="match status" value="2"/>
</dbReference>
<dbReference type="Pfam" id="PF16665">
    <property type="entry name" value="NCOA_u2"/>
    <property type="match status" value="1"/>
</dbReference>
<dbReference type="Pfam" id="PF08815">
    <property type="entry name" value="Nuc_rec_co-act"/>
    <property type="match status" value="1"/>
</dbReference>
<dbReference type="Pfam" id="PF00989">
    <property type="entry name" value="PAS"/>
    <property type="match status" value="1"/>
</dbReference>
<dbReference type="Pfam" id="PF14598">
    <property type="entry name" value="PAS_11"/>
    <property type="match status" value="1"/>
</dbReference>
<dbReference type="Pfam" id="PF08832">
    <property type="entry name" value="SRC-1"/>
    <property type="match status" value="1"/>
</dbReference>
<dbReference type="PIRSF" id="PIRSF038181">
    <property type="entry name" value="Nuclear_receptor_coactivator"/>
    <property type="match status" value="1"/>
</dbReference>
<dbReference type="SMART" id="SM01151">
    <property type="entry name" value="DUF1518"/>
    <property type="match status" value="2"/>
</dbReference>
<dbReference type="SMART" id="SM00353">
    <property type="entry name" value="HLH"/>
    <property type="match status" value="1"/>
</dbReference>
<dbReference type="SMART" id="SM00091">
    <property type="entry name" value="PAS"/>
    <property type="match status" value="1"/>
</dbReference>
<dbReference type="SUPFAM" id="SSF47459">
    <property type="entry name" value="HLH, helix-loop-helix DNA-binding domain"/>
    <property type="match status" value="1"/>
</dbReference>
<dbReference type="SUPFAM" id="SSF69125">
    <property type="entry name" value="Nuclear receptor coactivator interlocking domain"/>
    <property type="match status" value="1"/>
</dbReference>
<dbReference type="SUPFAM" id="SSF55785">
    <property type="entry name" value="PYP-like sensor domain (PAS domain)"/>
    <property type="match status" value="2"/>
</dbReference>
<dbReference type="PROSITE" id="PS50888">
    <property type="entry name" value="BHLH"/>
    <property type="match status" value="1"/>
</dbReference>
<dbReference type="PROSITE" id="PS50112">
    <property type="entry name" value="PAS"/>
    <property type="match status" value="1"/>
</dbReference>
<gene>
    <name type="primary">NCOA1</name>
    <name type="synonym">SRC1</name>
</gene>
<keyword id="KW-0007">Acetylation</keyword>
<keyword id="KW-0010">Activator</keyword>
<keyword id="KW-0012">Acyltransferase</keyword>
<keyword id="KW-1017">Isopeptide bond</keyword>
<keyword id="KW-0488">Methylation</keyword>
<keyword id="KW-0539">Nucleus</keyword>
<keyword id="KW-0597">Phosphoprotein</keyword>
<keyword id="KW-0675">Receptor</keyword>
<keyword id="KW-1185">Reference proteome</keyword>
<keyword id="KW-0677">Repeat</keyword>
<keyword id="KW-0804">Transcription</keyword>
<keyword id="KW-0805">Transcription regulation</keyword>
<keyword id="KW-0808">Transferase</keyword>
<keyword id="KW-0832">Ubl conjugation</keyword>
<comment type="function">
    <text evidence="1">Nuclear receptor coactivator that directly binds nuclear receptors and stimulates the transcriptional activities in a hormone-dependent fashion. Involved in the coactivation of different nuclear receptors, such as for steroids (PGR, GR and ER), retinoids (RXRs), thyroid hormone (TRs) and prostanoids (PPARs). Also involved in coactivation mediated by STAT3, STAT5A, STAT5B and STAT6 transcription factors. Displays histone acetyltransferase activity toward H3 and H4; the relevance of such activity remains however unclear. Plays a central role in creating multisubunit coactivator complexes that act via remodeling of chromatin, and possibly acts by participating in both chromatin remodeling and recruitment of general transcription factors. Required with NCOA2 to control energy balance between white and brown adipose tissues. Required for mediating steroid hormone response (By similarity).</text>
</comment>
<comment type="catalytic activity">
    <reaction>
        <text>L-lysyl-[protein] + acetyl-CoA = N(6)-acetyl-L-lysyl-[protein] + CoA + H(+)</text>
        <dbReference type="Rhea" id="RHEA:45948"/>
        <dbReference type="Rhea" id="RHEA-COMP:9752"/>
        <dbReference type="Rhea" id="RHEA-COMP:10731"/>
        <dbReference type="ChEBI" id="CHEBI:15378"/>
        <dbReference type="ChEBI" id="CHEBI:29969"/>
        <dbReference type="ChEBI" id="CHEBI:57287"/>
        <dbReference type="ChEBI" id="CHEBI:57288"/>
        <dbReference type="ChEBI" id="CHEBI:61930"/>
        <dbReference type="EC" id="2.3.1.48"/>
    </reaction>
</comment>
<comment type="subunit">
    <text evidence="2 3">Interacts with PPARA; the interaction is direct (By similarity). Interacts with PPARG; the interaction is direct (By similarity). Interacts with ESRRG; the interaction is direct (By similarity). Interacts with STAT5A (via FDL motif) (By similarity). Interacts with STAT5B (via FDL motif) (By similarity). Interacts with STAT6 (via LXXLL motif) (By similarity). Interacts (via LXXLL 1, 2 and 3 motifs) with RORC (via AF-2 motif) (By similarity). Interacts with ASXL1 (By similarity). Interacts with the methyltransferase CARM1 (By similarity). Interacts with COPS5 (By similarity). Interacts with the histone acetyltransferase CREBBP (By similarity). Interacts with DDX5 (By similarity). Interacts with the histone acetyltransferase EP300 (By similarity). Interacts with ESR1 (By similarity). Interacts with GCCR (By similarity). Interacts with the basal transcription factor GTF2B (By similarity). Interacts with NCOA6 (By similarity). Interacts with NCOA2 (By similarity). Interacts with NR3C1 (By similarity). Interacts with NR4A1/Nur77 (By similarity). Interacts with NR4A3 (By similarity). Interacts with PCAF (By similarity). Interacts with PGR (By similarity). Interacts with PRMT2 (By similarity). Interacts with PRMT6 (By similarity). Interacts with PSMB9 (By similarity). Interacts with RXRA, the interaction is ligand-dependent (By similarity). Interacts with STAT3 following IL-6 stimulation (By similarity). Interacts with TRA (By similarity). Interacts with TRIP4 (By similarity). Interacts with TTLL5/STAMP (By similarity). Interacts with UBE2L3; they functionally interact to regulate progesterone receptor transcriptional activity (By similarity). Interacts with VDR (By similarity).</text>
</comment>
<comment type="subcellular location">
    <subcellularLocation>
        <location evidence="5">Nucleus</location>
    </subcellularLocation>
</comment>
<comment type="domain">
    <text evidence="1">The C-terminal (1107-1447) part mediates the histone acetyltransferase (HAT) activity.</text>
</comment>
<comment type="domain">
    <text>Contains 7 Leu-Xaa-Xaa-Leu-Leu (LXXLL) motifs. LXXLL motifs 3, 4 and 5 are essential for the association with nuclear receptors.</text>
</comment>
<comment type="PTM">
    <text evidence="1">Sumoylated; sumoylation increases its interaction with PGR and prolongs its retention in the nucleus. It does not prevent its ubiquitination and does not exert a clear effect on the stability of the protein (By similarity).</text>
</comment>
<comment type="PTM">
    <text evidence="1">Ubiquitinated; leading to proteasome-mediated degradation. Ubiquitination and sumoylation take place at different sites (By similarity).</text>
</comment>
<comment type="similarity">
    <text evidence="7">Belongs to the SRC/p160 nuclear receptor coactivator family.</text>
</comment>
<feature type="initiator methionine" description="Removed" evidence="3">
    <location>
        <position position="1"/>
    </location>
</feature>
<feature type="chain" id="PRO_0000300687" description="Nuclear receptor coactivator 1">
    <location>
        <begin position="2"/>
        <end position="1440"/>
    </location>
</feature>
<feature type="domain" description="bHLH" evidence="5">
    <location>
        <begin position="23"/>
        <end position="80"/>
    </location>
</feature>
<feature type="domain" description="PAS" evidence="4">
    <location>
        <begin position="109"/>
        <end position="180"/>
    </location>
</feature>
<feature type="region of interest" description="Disordered" evidence="6">
    <location>
        <begin position="1"/>
        <end position="39"/>
    </location>
</feature>
<feature type="region of interest" description="Disordered" evidence="6">
    <location>
        <begin position="83"/>
        <end position="103"/>
    </location>
</feature>
<feature type="region of interest" description="Interaction with STAT3" evidence="1">
    <location>
        <begin position="361"/>
        <end position="567"/>
    </location>
</feature>
<feature type="region of interest" description="Disordered" evidence="6">
    <location>
        <begin position="368"/>
        <end position="445"/>
    </location>
</feature>
<feature type="region of interest" description="Disordered" evidence="6">
    <location>
        <begin position="496"/>
        <end position="515"/>
    </location>
</feature>
<feature type="region of interest" description="Disordered" evidence="6">
    <location>
        <begin position="545"/>
        <end position="626"/>
    </location>
</feature>
<feature type="region of interest" description="Disordered" evidence="6">
    <location>
        <begin position="661"/>
        <end position="739"/>
    </location>
</feature>
<feature type="region of interest" description="Disordered" evidence="6">
    <location>
        <begin position="777"/>
        <end position="797"/>
    </location>
</feature>
<feature type="region of interest" description="Interaction with CREBBP" evidence="1">
    <location>
        <begin position="781"/>
        <end position="988"/>
    </location>
</feature>
<feature type="region of interest" description="Disordered" evidence="6">
    <location>
        <begin position="1142"/>
        <end position="1187"/>
    </location>
</feature>
<feature type="region of interest" description="Disordered" evidence="6">
    <location>
        <begin position="1408"/>
        <end position="1440"/>
    </location>
</feature>
<feature type="short sequence motif" description="LXXLL motif 1" evidence="1">
    <location>
        <begin position="46"/>
        <end position="50"/>
    </location>
</feature>
<feature type="short sequence motif" description="LXXLL motif 2" evidence="1">
    <location>
        <begin position="112"/>
        <end position="116"/>
    </location>
</feature>
<feature type="short sequence motif" description="LXXLL motif 3" evidence="1">
    <location>
        <begin position="633"/>
        <end position="637"/>
    </location>
</feature>
<feature type="short sequence motif" description="LXXLL motif 4" evidence="1">
    <location>
        <begin position="690"/>
        <end position="694"/>
    </location>
</feature>
<feature type="short sequence motif" description="LXXLL motif 5" evidence="1">
    <location>
        <begin position="749"/>
        <end position="753"/>
    </location>
</feature>
<feature type="short sequence motif" description="LXXLL motif 6" evidence="1">
    <location>
        <begin position="913"/>
        <end position="917"/>
    </location>
</feature>
<feature type="short sequence motif" description="LXXLL motif 7" evidence="1">
    <location>
        <begin position="1434"/>
        <end position="1438"/>
    </location>
</feature>
<feature type="compositionally biased region" description="Polar residues" evidence="6">
    <location>
        <begin position="1"/>
        <end position="11"/>
    </location>
</feature>
<feature type="compositionally biased region" description="Basic and acidic residues" evidence="6">
    <location>
        <begin position="83"/>
        <end position="96"/>
    </location>
</feature>
<feature type="compositionally biased region" description="Polar residues" evidence="6">
    <location>
        <begin position="371"/>
        <end position="381"/>
    </location>
</feature>
<feature type="compositionally biased region" description="Polar residues" evidence="6">
    <location>
        <begin position="402"/>
        <end position="421"/>
    </location>
</feature>
<feature type="compositionally biased region" description="Low complexity" evidence="6">
    <location>
        <begin position="422"/>
        <end position="444"/>
    </location>
</feature>
<feature type="compositionally biased region" description="Polar residues" evidence="6">
    <location>
        <begin position="504"/>
        <end position="515"/>
    </location>
</feature>
<feature type="compositionally biased region" description="Polar residues" evidence="6">
    <location>
        <begin position="563"/>
        <end position="574"/>
    </location>
</feature>
<feature type="compositionally biased region" description="Polar residues" evidence="6">
    <location>
        <begin position="588"/>
        <end position="604"/>
    </location>
</feature>
<feature type="compositionally biased region" description="Basic and acidic residues" evidence="6">
    <location>
        <begin position="615"/>
        <end position="624"/>
    </location>
</feature>
<feature type="compositionally biased region" description="Low complexity" evidence="6">
    <location>
        <begin position="661"/>
        <end position="682"/>
    </location>
</feature>
<feature type="compositionally biased region" description="Polar residues" evidence="6">
    <location>
        <begin position="697"/>
        <end position="706"/>
    </location>
</feature>
<feature type="compositionally biased region" description="Polar residues" evidence="6">
    <location>
        <begin position="715"/>
        <end position="727"/>
    </location>
</feature>
<feature type="compositionally biased region" description="Low complexity" evidence="6">
    <location>
        <begin position="1415"/>
        <end position="1440"/>
    </location>
</feature>
<feature type="modified residue" description="N-acetylserine" evidence="3">
    <location>
        <position position="2"/>
    </location>
</feature>
<feature type="modified residue" description="Phosphoserine" evidence="3">
    <location>
        <position position="22"/>
    </location>
</feature>
<feature type="modified residue" description="Phosphoserine" evidence="3">
    <location>
        <position position="372"/>
    </location>
</feature>
<feature type="modified residue" description="Phosphoserine" evidence="3">
    <location>
        <position position="395"/>
    </location>
</feature>
<feature type="modified residue" description="Phosphoserine" evidence="3">
    <location>
        <position position="517"/>
    </location>
</feature>
<feature type="modified residue" description="Phosphoserine" evidence="2">
    <location>
        <position position="558"/>
    </location>
</feature>
<feature type="modified residue" description="Phosphoserine" evidence="3">
    <location>
        <position position="569"/>
    </location>
</feature>
<feature type="modified residue" description="Phosphoserine" evidence="3">
    <location>
        <position position="698"/>
    </location>
</feature>
<feature type="modified residue" description="Phosphoserine" evidence="3">
    <location>
        <position position="1033"/>
    </location>
</feature>
<feature type="modified residue" description="Asymmetric dimethylarginine" evidence="2">
    <location>
        <position position="1073"/>
    </location>
</feature>
<feature type="modified residue" description="Asymmetric dimethylarginine" evidence="2">
    <location>
        <position position="1091"/>
    </location>
</feature>
<feature type="modified residue" description="Asymmetric dimethylarginine" evidence="2">
    <location>
        <position position="1124"/>
    </location>
</feature>
<feature type="modified residue" description="Asymmetric dimethylarginine" evidence="2">
    <location>
        <position position="1131"/>
    </location>
</feature>
<feature type="modified residue" description="Phosphothreonine" evidence="3">
    <location>
        <position position="1179"/>
    </location>
</feature>
<feature type="modified residue" description="Phosphoserine" evidence="3">
    <location>
        <position position="1185"/>
    </location>
</feature>
<feature type="modified residue" description="Phosphoserine" evidence="3">
    <location>
        <position position="1372"/>
    </location>
</feature>
<feature type="cross-link" description="Glycyl lysine isopeptide (Lys-Gly) (interchain with G-Cter in SUMO)" evidence="1">
    <location>
        <position position="732"/>
    </location>
</feature>
<feature type="cross-link" description="Glycyl lysine isopeptide (Lys-Gly) (interchain with G-Cter in SUMO)" evidence="1">
    <location>
        <position position="774"/>
    </location>
</feature>
<feature type="cross-link" description="Glycyl lysine isopeptide (Lys-Gly) (interchain with G-Cter in SUMO2)" evidence="3">
    <location>
        <position position="846"/>
    </location>
</feature>
<proteinExistence type="evidence at transcript level"/>
<evidence type="ECO:0000250" key="1"/>
<evidence type="ECO:0000250" key="2">
    <source>
        <dbReference type="UniProtKB" id="P70365"/>
    </source>
</evidence>
<evidence type="ECO:0000250" key="3">
    <source>
        <dbReference type="UniProtKB" id="Q15788"/>
    </source>
</evidence>
<evidence type="ECO:0000255" key="4">
    <source>
        <dbReference type="PROSITE-ProRule" id="PRU00140"/>
    </source>
</evidence>
<evidence type="ECO:0000255" key="5">
    <source>
        <dbReference type="PROSITE-ProRule" id="PRU00981"/>
    </source>
</evidence>
<evidence type="ECO:0000256" key="6">
    <source>
        <dbReference type="SAM" id="MobiDB-lite"/>
    </source>
</evidence>
<evidence type="ECO:0000305" key="7"/>